<organism>
    <name type="scientific">Bartonella quintana (strain Toulouse)</name>
    <name type="common">Rochalimaea quintana</name>
    <dbReference type="NCBI Taxonomy" id="283165"/>
    <lineage>
        <taxon>Bacteria</taxon>
        <taxon>Pseudomonadati</taxon>
        <taxon>Pseudomonadota</taxon>
        <taxon>Alphaproteobacteria</taxon>
        <taxon>Hyphomicrobiales</taxon>
        <taxon>Bartonellaceae</taxon>
        <taxon>Bartonella</taxon>
    </lineage>
</organism>
<gene>
    <name type="primary">virB8</name>
    <name type="ordered locus">BQ10590</name>
</gene>
<name>VIRB8_BARQU</name>
<sequence>MKNSLIKIRKSLVKSDAFDEYVKEARSFDIDRMHSLQQRMRIAMTLTVLFGLMTIALALAVAALTPLKTVEPFVIRVDNSTGIIETVSALKETPNNYDEAITRYFAGKYVRAREGFQLSEAEYNFRLISLLSSPEEQNRFAKWYSGNNPESPQNIYHNMTAKVTIKSISFLSKDLIQVRYYKTIRELNGKENISHWVSILNFSYINAHISTEDRLINPLGFQVSEYRSDPEVIK</sequence>
<accession>Q6FYW3</accession>
<accession>Q4L2Q5</accession>
<accession>Q8KQB8</accession>
<accession>Q8KQB9</accession>
<proteinExistence type="evidence at protein level"/>
<protein>
    <recommendedName>
        <fullName>Type IV secretion system protein virB8</fullName>
    </recommendedName>
</protein>
<reference key="1">
    <citation type="submission" date="2002-06" db="EMBL/GenBank/DDBJ databases">
        <title>Evolution of type IV secretion systems in Bartonella: horizontal transmission and gene conversion.</title>
        <authorList>
            <person name="Alsmark U.C.M."/>
            <person name="Frank A.C."/>
            <person name="Thollesson M."/>
            <person name="Andersson S.G.E."/>
        </authorList>
    </citation>
    <scope>NUCLEOTIDE SEQUENCE [GENOMIC DNA]</scope>
    <source>
        <strain>Toulouse</strain>
    </source>
</reference>
<reference key="2">
    <citation type="submission" date="2003-01" db="EMBL/GenBank/DDBJ databases">
        <title>Genes composing the virB operon of Bartonella quintana.</title>
        <authorList>
            <person name="Kohlhorst D.E."/>
            <person name="Soni T."/>
            <person name="Baumstark B.R."/>
        </authorList>
    </citation>
    <scope>NUCLEOTIDE SEQUENCE [GENOMIC DNA]</scope>
    <source>
        <strain>ATCC VR-358 / Fuller / CIP 107027</strain>
    </source>
</reference>
<reference key="3">
    <citation type="journal article" date="2004" name="Proc. Natl. Acad. Sci. U.S.A.">
        <title>The louse-borne human pathogen Bartonella quintana is a genomic derivative of the zoonotic agent Bartonella henselae.</title>
        <authorList>
            <person name="Alsmark U.C.M."/>
            <person name="Frank A.C."/>
            <person name="Karlberg E.O."/>
            <person name="Legault B.-A."/>
            <person name="Ardell D.H."/>
            <person name="Canbaeck B."/>
            <person name="Eriksson A.-S."/>
            <person name="Naeslund A.K."/>
            <person name="Handley S.A."/>
            <person name="Huvet M."/>
            <person name="La Scola B."/>
            <person name="Holmberg M."/>
            <person name="Andersson S.G.E."/>
        </authorList>
    </citation>
    <scope>NUCLEOTIDE SEQUENCE [LARGE SCALE GENOMIC DNA]</scope>
    <scope>POSSIBLE FUNCTION</scope>
    <source>
        <strain>Toulouse</strain>
    </source>
</reference>
<keyword id="KW-0002">3D-structure</keyword>
<keyword id="KW-0997">Cell inner membrane</keyword>
<keyword id="KW-1003">Cell membrane</keyword>
<keyword id="KW-0472">Membrane</keyword>
<keyword id="KW-0812">Transmembrane</keyword>
<keyword id="KW-1133">Transmembrane helix</keyword>
<keyword id="KW-0813">Transport</keyword>
<keyword id="KW-0843">Virulence</keyword>
<dbReference type="EMBL" id="AY122055">
    <property type="protein sequence ID" value="AAM82241.1"/>
    <property type="molecule type" value="Genomic_DNA"/>
</dbReference>
<dbReference type="EMBL" id="AY216720">
    <property type="protein sequence ID" value="AAM43802.1"/>
    <property type="status" value="ALT_INIT"/>
    <property type="molecule type" value="Genomic_DNA"/>
</dbReference>
<dbReference type="EMBL" id="AY216720">
    <property type="protein sequence ID" value="AAM43803.1"/>
    <property type="molecule type" value="Genomic_DNA"/>
</dbReference>
<dbReference type="EMBL" id="BX897700">
    <property type="protein sequence ID" value="CAF26526.1"/>
    <property type="status" value="ALT_INIT"/>
    <property type="molecule type" value="Genomic_DNA"/>
</dbReference>
<dbReference type="RefSeq" id="WP_196229941.1">
    <property type="nucleotide sequence ID" value="NC_005955.1"/>
</dbReference>
<dbReference type="PDB" id="4LSO">
    <property type="method" value="X-ray"/>
    <property type="resolution" value="1.70 A"/>
    <property type="chains" value="A=65-234"/>
</dbReference>
<dbReference type="PDBsum" id="4LSO"/>
<dbReference type="SMR" id="Q6FYW3"/>
<dbReference type="KEGG" id="bqu:BQ10590"/>
<dbReference type="eggNOG" id="COG3736">
    <property type="taxonomic scope" value="Bacteria"/>
</dbReference>
<dbReference type="HOGENOM" id="CLU_068461_1_1_5"/>
<dbReference type="EvolutionaryTrace" id="Q6FYW3"/>
<dbReference type="Proteomes" id="UP000000597">
    <property type="component" value="Chromosome"/>
</dbReference>
<dbReference type="GO" id="GO:0005886">
    <property type="term" value="C:plasma membrane"/>
    <property type="evidence" value="ECO:0007669"/>
    <property type="project" value="UniProtKB-SubCell"/>
</dbReference>
<dbReference type="GO" id="GO:0030255">
    <property type="term" value="P:protein secretion by the type IV secretion system"/>
    <property type="evidence" value="ECO:0007669"/>
    <property type="project" value="InterPro"/>
</dbReference>
<dbReference type="CDD" id="cd16424">
    <property type="entry name" value="VirB8"/>
    <property type="match status" value="1"/>
</dbReference>
<dbReference type="Gene3D" id="3.10.450.230">
    <property type="entry name" value="VirB8 protein"/>
    <property type="match status" value="1"/>
</dbReference>
<dbReference type="InterPro" id="IPR032710">
    <property type="entry name" value="NTF2-like_dom_sf"/>
</dbReference>
<dbReference type="InterPro" id="IPR007430">
    <property type="entry name" value="VirB8"/>
</dbReference>
<dbReference type="InterPro" id="IPR026264">
    <property type="entry name" value="VirB8/PtlE"/>
</dbReference>
<dbReference type="Pfam" id="PF04335">
    <property type="entry name" value="VirB8"/>
    <property type="match status" value="1"/>
</dbReference>
<dbReference type="PIRSF" id="PIRSF003299">
    <property type="entry name" value="VirB8_PtlE"/>
    <property type="match status" value="1"/>
</dbReference>
<dbReference type="SUPFAM" id="SSF54427">
    <property type="entry name" value="NTF2-like"/>
    <property type="match status" value="1"/>
</dbReference>
<comment type="function">
    <text>Component of the type IV secretion system VirB/VirD4 which could be a major virulence determinant for subversion of human endothelial cell (HEC) function.</text>
</comment>
<comment type="subunit">
    <text evidence="1">Interacts with virB9 and virB10.</text>
</comment>
<comment type="subcellular location">
    <subcellularLocation>
        <location evidence="3">Cell inner membrane</location>
        <topology evidence="3">Single-pass membrane protein</topology>
    </subcellularLocation>
</comment>
<comment type="similarity">
    <text evidence="3">Belongs to the virB8 family.</text>
</comment>
<comment type="sequence caution" evidence="3">
    <conflict type="erroneous initiation">
        <sequence resource="EMBL-CDS" id="AAM43802"/>
    </conflict>
</comment>
<comment type="sequence caution" evidence="3">
    <conflict type="erroneous initiation">
        <sequence resource="EMBL-CDS" id="CAF26526"/>
    </conflict>
</comment>
<feature type="chain" id="PRO_0000281412" description="Type IV secretion system protein virB8">
    <location>
        <begin position="1"/>
        <end position="234"/>
    </location>
</feature>
<feature type="topological domain" description="Cytoplasmic" evidence="2">
    <location>
        <begin position="1"/>
        <end position="41"/>
    </location>
</feature>
<feature type="transmembrane region" description="Helical" evidence="2">
    <location>
        <begin position="42"/>
        <end position="62"/>
    </location>
</feature>
<feature type="topological domain" description="Periplasmic" evidence="2">
    <location>
        <begin position="63"/>
        <end position="234"/>
    </location>
</feature>
<feature type="helix" evidence="4">
    <location>
        <begin position="99"/>
        <end position="114"/>
    </location>
</feature>
<feature type="helix" evidence="4">
    <location>
        <begin position="118"/>
        <end position="120"/>
    </location>
</feature>
<feature type="helix" evidence="4">
    <location>
        <begin position="121"/>
        <end position="131"/>
    </location>
</feature>
<feature type="helix" evidence="4">
    <location>
        <begin position="134"/>
        <end position="144"/>
    </location>
</feature>
<feature type="helix" evidence="4">
    <location>
        <begin position="152"/>
        <end position="155"/>
    </location>
</feature>
<feature type="turn" evidence="4">
    <location>
        <begin position="156"/>
        <end position="158"/>
    </location>
</feature>
<feature type="strand" evidence="4">
    <location>
        <begin position="160"/>
        <end position="172"/>
    </location>
</feature>
<feature type="strand" evidence="4">
    <location>
        <begin position="175"/>
        <end position="185"/>
    </location>
</feature>
<feature type="strand" evidence="4">
    <location>
        <begin position="191"/>
        <end position="204"/>
    </location>
</feature>
<feature type="helix" evidence="4">
    <location>
        <begin position="211"/>
        <end position="216"/>
    </location>
</feature>
<feature type="strand" evidence="4">
    <location>
        <begin position="221"/>
        <end position="230"/>
    </location>
</feature>
<evidence type="ECO:0000250" key="1"/>
<evidence type="ECO:0000255" key="2"/>
<evidence type="ECO:0000305" key="3"/>
<evidence type="ECO:0007829" key="4">
    <source>
        <dbReference type="PDB" id="4LSO"/>
    </source>
</evidence>